<accession>Q2T9J0</accession>
<accession>Q5SQT4</accession>
<accession>Q5SQU1</accession>
<accession>Q8N6H2</accession>
<accession>Q96AR5</accession>
<reference key="1">
    <citation type="journal article" date="2004" name="Nature">
        <title>The DNA sequence and comparative analysis of human chromosome 10.</title>
        <authorList>
            <person name="Deloukas P."/>
            <person name="Earthrowl M.E."/>
            <person name="Grafham D.V."/>
            <person name="Rubenfield M."/>
            <person name="French L."/>
            <person name="Steward C.A."/>
            <person name="Sims S.K."/>
            <person name="Jones M.C."/>
            <person name="Searle S."/>
            <person name="Scott C."/>
            <person name="Howe K."/>
            <person name="Hunt S.E."/>
            <person name="Andrews T.D."/>
            <person name="Gilbert J.G.R."/>
            <person name="Swarbreck D."/>
            <person name="Ashurst J.L."/>
            <person name="Taylor A."/>
            <person name="Battles J."/>
            <person name="Bird C.P."/>
            <person name="Ainscough R."/>
            <person name="Almeida J.P."/>
            <person name="Ashwell R.I.S."/>
            <person name="Ambrose K.D."/>
            <person name="Babbage A.K."/>
            <person name="Bagguley C.L."/>
            <person name="Bailey J."/>
            <person name="Banerjee R."/>
            <person name="Bates K."/>
            <person name="Beasley H."/>
            <person name="Bray-Allen S."/>
            <person name="Brown A.J."/>
            <person name="Brown J.Y."/>
            <person name="Burford D.C."/>
            <person name="Burrill W."/>
            <person name="Burton J."/>
            <person name="Cahill P."/>
            <person name="Camire D."/>
            <person name="Carter N.P."/>
            <person name="Chapman J.C."/>
            <person name="Clark S.Y."/>
            <person name="Clarke G."/>
            <person name="Clee C.M."/>
            <person name="Clegg S."/>
            <person name="Corby N."/>
            <person name="Coulson A."/>
            <person name="Dhami P."/>
            <person name="Dutta I."/>
            <person name="Dunn M."/>
            <person name="Faulkner L."/>
            <person name="Frankish A."/>
            <person name="Frankland J.A."/>
            <person name="Garner P."/>
            <person name="Garnett J."/>
            <person name="Gribble S."/>
            <person name="Griffiths C."/>
            <person name="Grocock R."/>
            <person name="Gustafson E."/>
            <person name="Hammond S."/>
            <person name="Harley J.L."/>
            <person name="Hart E."/>
            <person name="Heath P.D."/>
            <person name="Ho T.P."/>
            <person name="Hopkins B."/>
            <person name="Horne J."/>
            <person name="Howden P.J."/>
            <person name="Huckle E."/>
            <person name="Hynds C."/>
            <person name="Johnson C."/>
            <person name="Johnson D."/>
            <person name="Kana A."/>
            <person name="Kay M."/>
            <person name="Kimberley A.M."/>
            <person name="Kershaw J.K."/>
            <person name="Kokkinaki M."/>
            <person name="Laird G.K."/>
            <person name="Lawlor S."/>
            <person name="Lee H.M."/>
            <person name="Leongamornlert D.A."/>
            <person name="Laird G."/>
            <person name="Lloyd C."/>
            <person name="Lloyd D.M."/>
            <person name="Loveland J."/>
            <person name="Lovell J."/>
            <person name="McLaren S."/>
            <person name="McLay K.E."/>
            <person name="McMurray A."/>
            <person name="Mashreghi-Mohammadi M."/>
            <person name="Matthews L."/>
            <person name="Milne S."/>
            <person name="Nickerson T."/>
            <person name="Nguyen M."/>
            <person name="Overton-Larty E."/>
            <person name="Palmer S.A."/>
            <person name="Pearce A.V."/>
            <person name="Peck A.I."/>
            <person name="Pelan S."/>
            <person name="Phillimore B."/>
            <person name="Porter K."/>
            <person name="Rice C.M."/>
            <person name="Rogosin A."/>
            <person name="Ross M.T."/>
            <person name="Sarafidou T."/>
            <person name="Sehra H.K."/>
            <person name="Shownkeen R."/>
            <person name="Skuce C.D."/>
            <person name="Smith M."/>
            <person name="Standring L."/>
            <person name="Sycamore N."/>
            <person name="Tester J."/>
            <person name="Thorpe A."/>
            <person name="Torcasso W."/>
            <person name="Tracey A."/>
            <person name="Tromans A."/>
            <person name="Tsolas J."/>
            <person name="Wall M."/>
            <person name="Walsh J."/>
            <person name="Wang H."/>
            <person name="Weinstock K."/>
            <person name="West A.P."/>
            <person name="Willey D.L."/>
            <person name="Whitehead S.L."/>
            <person name="Wilming L."/>
            <person name="Wray P.W."/>
            <person name="Young L."/>
            <person name="Chen Y."/>
            <person name="Lovering R.C."/>
            <person name="Moschonas N.K."/>
            <person name="Siebert R."/>
            <person name="Fechtel K."/>
            <person name="Bentley D."/>
            <person name="Durbin R.M."/>
            <person name="Hubbard T."/>
            <person name="Doucette-Stamm L."/>
            <person name="Beck S."/>
            <person name="Smith D.R."/>
            <person name="Rogers J."/>
        </authorList>
    </citation>
    <scope>NUCLEOTIDE SEQUENCE [LARGE SCALE GENOMIC DNA]</scope>
</reference>
<reference key="2">
    <citation type="journal article" date="2004" name="Genome Res.">
        <title>The status, quality, and expansion of the NIH full-length cDNA project: the Mammalian Gene Collection (MGC).</title>
        <authorList>
            <consortium name="The MGC Project Team"/>
        </authorList>
    </citation>
    <scope>NUCLEOTIDE SEQUENCE [LARGE SCALE MRNA] (ISOFORMS 1 AND 2)</scope>
    <scope>VARIANT ALA-65</scope>
    <source>
        <tissue>Brain</tissue>
        <tissue>Lung</tissue>
    </source>
</reference>
<reference key="3">
    <citation type="journal article" date="2011" name="J. Biol. Chem.">
        <title>Two proteases, trypsin domain-containing 1 (Tysnd1) and peroxisomal lon protease (PsLon), cooperatively regulate fatty acid beta-oxidation in peroxisomal matrix.</title>
        <authorList>
            <person name="Okumoto K."/>
            <person name="Kametani Y."/>
            <person name="Fujiki Y."/>
        </authorList>
    </citation>
    <scope>FUNCTION</scope>
    <scope>SUBCELLULAR LOCATION</scope>
    <scope>MUTAGENESIS OF SER-481</scope>
    <scope>INTERACTION WITH PEX5 AND LONP2</scope>
</reference>
<keyword id="KW-0025">Alternative splicing</keyword>
<keyword id="KW-0378">Hydrolase</keyword>
<keyword id="KW-0576">Peroxisome</keyword>
<keyword id="KW-0645">Protease</keyword>
<keyword id="KW-1267">Proteomics identification</keyword>
<keyword id="KW-1185">Reference proteome</keyword>
<keyword id="KW-0720">Serine protease</keyword>
<proteinExistence type="evidence at protein level"/>
<sequence length="566" mass="59309">MRRQWGSAMRAAEQAGCMVSASRAGQPEAGPWSCSGVILSRSPGLVLCHGGIFVPFLRAGSEVLTAAGAVFLPGDSCRDDLRLHVQWAPTAAGPGGGAERGRPGLCTPQCASLEPGPPAPSRGRPLQPRLPAELLLLLSCPAFWAHFARLFGDEAAEQWRFSSAARDDEVSEDEEADQLRALGWFALLGVRLGQEEVEEERGPAMAVSPLGAVPKGAPLLVCGSPFGAFCPDIFLNTLSCGVLSNVAGPLLLTDARCLPGTEGGGVFTARPAGALVALVVAPLCWKAGEWVGFTLLCAAAPLFRAARDALHRLPHSTAALAALLPPEVGVPWGLPLRDSGPLWAAAAVLVECGTVWGSGVAVAPRLVVTCRHVSPREAARVLVRSTTPKSVAIWGRVVFATQETCPYDIAVVSLEEDLDDVPIPVPAEHFHEGEAVSVVGFGVFGQSCGPSVTSGILSAVVQVNGTPVMLQTTCAVHSGSSGGPLFSNHSGNLLGIITSNTRDNNTGATYPHLNFSIPITVLQPALQQYSQTQDLGGLRELDRAAEPVRVVWRLQRPLAEAPRSKL</sequence>
<gene>
    <name type="primary">TYSND1</name>
</gene>
<name>TYSD1_HUMAN</name>
<feature type="chain" id="PRO_0000286124" description="Peroxisomal leader peptide-processing protease">
    <location>
        <begin position="1"/>
        <end position="566"/>
    </location>
</feature>
<feature type="chain" id="PRO_0000286125" description="Peroxisomal leader peptide-processing protease, 15 kDa form">
    <location>
        <begin position="1"/>
        <end position="110"/>
    </location>
</feature>
<feature type="chain" id="PRO_0000286126" description="Peroxisomal leader peptide-processing protease, 45 kDa form">
    <location>
        <begin position="111"/>
        <end position="566"/>
    </location>
</feature>
<feature type="region of interest" description="Serine protease">
    <location>
        <begin position="319"/>
        <end position="531"/>
    </location>
</feature>
<feature type="active site" description="Charge relay system" evidence="1">
    <location>
        <position position="372"/>
    </location>
</feature>
<feature type="active site" description="Charge relay system" evidence="1">
    <location>
        <position position="408"/>
    </location>
</feature>
<feature type="active site" description="Charge relay system" evidence="1">
    <location>
        <position position="481"/>
    </location>
</feature>
<feature type="site" description="Cleavage" evidence="1">
    <location>
        <begin position="110"/>
        <end position="111"/>
    </location>
</feature>
<feature type="splice variant" id="VSP_025000" description="In isoform 2." evidence="4">
    <original>SVAIWGRVV</original>
    <variation>HNHQQHPGQ</variation>
    <location>
        <begin position="390"/>
        <end position="398"/>
    </location>
</feature>
<feature type="splice variant" id="VSP_025001" description="In isoform 2." evidence="4">
    <location>
        <begin position="399"/>
        <end position="566"/>
    </location>
</feature>
<feature type="sequence variant" id="VAR_059758" description="In dbSNP:rs4746970." evidence="2">
    <original>T</original>
    <variation>A</variation>
    <location>
        <position position="65"/>
    </location>
</feature>
<feature type="mutagenesis site" description="Abrogates the self-cleaving activity of TYSND1." evidence="3">
    <original>S</original>
    <variation>A</variation>
    <location>
        <position position="481"/>
    </location>
</feature>
<feature type="sequence conflict" description="In Ref. 2; AAH30242." evidence="5" ref="2">
    <original>P</original>
    <variation>L</variation>
    <location>
        <position position="203"/>
    </location>
</feature>
<organism>
    <name type="scientific">Homo sapiens</name>
    <name type="common">Human</name>
    <dbReference type="NCBI Taxonomy" id="9606"/>
    <lineage>
        <taxon>Eukaryota</taxon>
        <taxon>Metazoa</taxon>
        <taxon>Chordata</taxon>
        <taxon>Craniata</taxon>
        <taxon>Vertebrata</taxon>
        <taxon>Euteleostomi</taxon>
        <taxon>Mammalia</taxon>
        <taxon>Eutheria</taxon>
        <taxon>Euarchontoglires</taxon>
        <taxon>Primates</taxon>
        <taxon>Haplorrhini</taxon>
        <taxon>Catarrhini</taxon>
        <taxon>Hominidae</taxon>
        <taxon>Homo</taxon>
    </lineage>
</organism>
<protein>
    <recommendedName>
        <fullName>Peroxisomal leader peptide-processing protease</fullName>
        <ecNumber>3.4.21.-</ecNumber>
    </recommendedName>
    <alternativeName>
        <fullName>Trypsin domain-containing protein 1</fullName>
    </alternativeName>
    <component>
        <recommendedName>
            <fullName>Peroxisomal leader peptide-processing protease, 15 kDa form</fullName>
        </recommendedName>
    </component>
    <component>
        <recommendedName>
            <fullName>Peroxisomal leader peptide-processing protease, 45 kDa form</fullName>
        </recommendedName>
    </component>
</protein>
<evidence type="ECO:0000250" key="1"/>
<evidence type="ECO:0000269" key="2">
    <source>
    </source>
</evidence>
<evidence type="ECO:0000269" key="3">
    <source>
    </source>
</evidence>
<evidence type="ECO:0000303" key="4">
    <source>
    </source>
</evidence>
<evidence type="ECO:0000305" key="5"/>
<dbReference type="EC" id="3.4.21.-"/>
<dbReference type="EMBL" id="AL731540">
    <property type="status" value="NOT_ANNOTATED_CDS"/>
    <property type="molecule type" value="Genomic_DNA"/>
</dbReference>
<dbReference type="EMBL" id="BC016840">
    <property type="protein sequence ID" value="AAH16840.1"/>
    <property type="molecule type" value="mRNA"/>
</dbReference>
<dbReference type="EMBL" id="BC030242">
    <property type="protein sequence ID" value="AAH30242.1"/>
    <property type="molecule type" value="mRNA"/>
</dbReference>
<dbReference type="EMBL" id="BC111501">
    <property type="protein sequence ID" value="AAI11502.2"/>
    <property type="molecule type" value="mRNA"/>
</dbReference>
<dbReference type="CCDS" id="CCDS31213.1">
    <molecule id="Q2T9J0-1"/>
</dbReference>
<dbReference type="CCDS" id="CCDS31214.1">
    <molecule id="Q2T9J0-2"/>
</dbReference>
<dbReference type="RefSeq" id="NP_001035363.1">
    <molecule id="Q2T9J0-2"/>
    <property type="nucleotide sequence ID" value="NM_001040273.3"/>
</dbReference>
<dbReference type="RefSeq" id="NP_775826.2">
    <molecule id="Q2T9J0-1"/>
    <property type="nucleotide sequence ID" value="NM_173555.4"/>
</dbReference>
<dbReference type="SMR" id="Q2T9J0"/>
<dbReference type="BioGRID" id="128571">
    <property type="interactions" value="51"/>
</dbReference>
<dbReference type="FunCoup" id="Q2T9J0">
    <property type="interactions" value="669"/>
</dbReference>
<dbReference type="IntAct" id="Q2T9J0">
    <property type="interactions" value="25"/>
</dbReference>
<dbReference type="STRING" id="9606.ENSP00000287078"/>
<dbReference type="MEROPS" id="S01.286"/>
<dbReference type="iPTMnet" id="Q2T9J0"/>
<dbReference type="PhosphoSitePlus" id="Q2T9J0"/>
<dbReference type="SwissPalm" id="Q2T9J0"/>
<dbReference type="BioMuta" id="TYSND1"/>
<dbReference type="DMDM" id="146325807"/>
<dbReference type="jPOST" id="Q2T9J0"/>
<dbReference type="MassIVE" id="Q2T9J0"/>
<dbReference type="PaxDb" id="9606-ENSP00000287078"/>
<dbReference type="PeptideAtlas" id="Q2T9J0"/>
<dbReference type="ProteomicsDB" id="61444">
    <molecule id="Q2T9J0-1"/>
</dbReference>
<dbReference type="ProteomicsDB" id="61445">
    <molecule id="Q2T9J0-2"/>
</dbReference>
<dbReference type="Pumba" id="Q2T9J0"/>
<dbReference type="Antibodypedia" id="48786">
    <property type="antibodies" value="67 antibodies from 17 providers"/>
</dbReference>
<dbReference type="DNASU" id="219743"/>
<dbReference type="Ensembl" id="ENST00000287078.7">
    <molecule id="Q2T9J0-1"/>
    <property type="protein sequence ID" value="ENSP00000287078.6"/>
    <property type="gene ID" value="ENSG00000156521.14"/>
</dbReference>
<dbReference type="Ensembl" id="ENST00000335494.5">
    <molecule id="Q2T9J0-2"/>
    <property type="protein sequence ID" value="ENSP00000335673.5"/>
    <property type="gene ID" value="ENSG00000156521.14"/>
</dbReference>
<dbReference type="GeneID" id="219743"/>
<dbReference type="KEGG" id="hsa:219743"/>
<dbReference type="MANE-Select" id="ENST00000287078.7">
    <property type="protein sequence ID" value="ENSP00000287078.6"/>
    <property type="RefSeq nucleotide sequence ID" value="NM_173555.4"/>
    <property type="RefSeq protein sequence ID" value="NP_775826.2"/>
</dbReference>
<dbReference type="UCSC" id="uc001jqr.5">
    <molecule id="Q2T9J0-1"/>
    <property type="organism name" value="human"/>
</dbReference>
<dbReference type="AGR" id="HGNC:28531"/>
<dbReference type="CTD" id="219743"/>
<dbReference type="DisGeNET" id="219743"/>
<dbReference type="GeneCards" id="TYSND1"/>
<dbReference type="HGNC" id="HGNC:28531">
    <property type="gene designation" value="TYSND1"/>
</dbReference>
<dbReference type="HPA" id="ENSG00000156521">
    <property type="expression patterns" value="Low tissue specificity"/>
</dbReference>
<dbReference type="MIM" id="611017">
    <property type="type" value="gene"/>
</dbReference>
<dbReference type="neXtProt" id="NX_Q2T9J0"/>
<dbReference type="OpenTargets" id="ENSG00000156521"/>
<dbReference type="PharmGKB" id="PA134968651"/>
<dbReference type="VEuPathDB" id="HostDB:ENSG00000156521"/>
<dbReference type="eggNOG" id="KOG1320">
    <property type="taxonomic scope" value="Eukaryota"/>
</dbReference>
<dbReference type="GeneTree" id="ENSGT00390000014627"/>
<dbReference type="HOGENOM" id="CLU_034855_1_0_1"/>
<dbReference type="InParanoid" id="Q2T9J0"/>
<dbReference type="OMA" id="GGPMFDQ"/>
<dbReference type="OrthoDB" id="17845at2759"/>
<dbReference type="PAN-GO" id="Q2T9J0">
    <property type="GO annotations" value="4 GO annotations based on evolutionary models"/>
</dbReference>
<dbReference type="PhylomeDB" id="Q2T9J0"/>
<dbReference type="TreeFam" id="TF331254"/>
<dbReference type="PathwayCommons" id="Q2T9J0"/>
<dbReference type="Reactome" id="R-HSA-9033241">
    <property type="pathway name" value="Peroxisomal protein import"/>
</dbReference>
<dbReference type="Reactome" id="R-HSA-9033500">
    <property type="pathway name" value="TYSND1 cleaves peroxisomal proteins"/>
</dbReference>
<dbReference type="SignaLink" id="Q2T9J0"/>
<dbReference type="SIGNOR" id="Q2T9J0"/>
<dbReference type="BioGRID-ORCS" id="219743">
    <property type="hits" value="15 hits in 1167 CRISPR screens"/>
</dbReference>
<dbReference type="ChiTaRS" id="TYSND1">
    <property type="organism name" value="human"/>
</dbReference>
<dbReference type="GenomeRNAi" id="219743"/>
<dbReference type="Pharos" id="Q2T9J0">
    <property type="development level" value="Tbio"/>
</dbReference>
<dbReference type="PRO" id="PR:Q2T9J0"/>
<dbReference type="Proteomes" id="UP000005640">
    <property type="component" value="Chromosome 10"/>
</dbReference>
<dbReference type="RNAct" id="Q2T9J0">
    <property type="molecule type" value="protein"/>
</dbReference>
<dbReference type="Bgee" id="ENSG00000156521">
    <property type="expression patterns" value="Expressed in left testis and 127 other cell types or tissues"/>
</dbReference>
<dbReference type="GO" id="GO:0005829">
    <property type="term" value="C:cytosol"/>
    <property type="evidence" value="ECO:0000304"/>
    <property type="project" value="Reactome"/>
</dbReference>
<dbReference type="GO" id="GO:0016020">
    <property type="term" value="C:membrane"/>
    <property type="evidence" value="ECO:0007005"/>
    <property type="project" value="UniProtKB"/>
</dbReference>
<dbReference type="GO" id="GO:0005782">
    <property type="term" value="C:peroxisomal matrix"/>
    <property type="evidence" value="ECO:0000304"/>
    <property type="project" value="Reactome"/>
</dbReference>
<dbReference type="GO" id="GO:0005777">
    <property type="term" value="C:peroxisome"/>
    <property type="evidence" value="ECO:0000314"/>
    <property type="project" value="UniProtKB"/>
</dbReference>
<dbReference type="GO" id="GO:0042802">
    <property type="term" value="F:identical protein binding"/>
    <property type="evidence" value="ECO:0000353"/>
    <property type="project" value="IntAct"/>
</dbReference>
<dbReference type="GO" id="GO:0002020">
    <property type="term" value="F:protease binding"/>
    <property type="evidence" value="ECO:0000353"/>
    <property type="project" value="UniProtKB"/>
</dbReference>
<dbReference type="GO" id="GO:0004252">
    <property type="term" value="F:serine-type endopeptidase activity"/>
    <property type="evidence" value="ECO:0000315"/>
    <property type="project" value="UniProtKB"/>
</dbReference>
<dbReference type="GO" id="GO:0016485">
    <property type="term" value="P:protein processing"/>
    <property type="evidence" value="ECO:0000315"/>
    <property type="project" value="UniProtKB"/>
</dbReference>
<dbReference type="GO" id="GO:0006508">
    <property type="term" value="P:proteolysis"/>
    <property type="evidence" value="ECO:0000315"/>
    <property type="project" value="UniProtKB"/>
</dbReference>
<dbReference type="GO" id="GO:0031998">
    <property type="term" value="P:regulation of fatty acid beta-oxidation"/>
    <property type="evidence" value="ECO:0000315"/>
    <property type="project" value="UniProtKB"/>
</dbReference>
<dbReference type="FunFam" id="2.40.10.10:FF:000080">
    <property type="entry name" value="peroxisomal leader peptide-processing protease"/>
    <property type="match status" value="1"/>
</dbReference>
<dbReference type="Gene3D" id="2.40.10.120">
    <property type="match status" value="1"/>
</dbReference>
<dbReference type="InterPro" id="IPR017345">
    <property type="entry name" value="Pept_S1A_Tysnd1"/>
</dbReference>
<dbReference type="InterPro" id="IPR009003">
    <property type="entry name" value="Peptidase_S1_PA"/>
</dbReference>
<dbReference type="InterPro" id="IPR039245">
    <property type="entry name" value="TYSND1/DEG15"/>
</dbReference>
<dbReference type="PANTHER" id="PTHR21004:SF0">
    <property type="entry name" value="PEROXISOMAL LEADER PEPTIDE-PROCESSING PROTEASE"/>
    <property type="match status" value="1"/>
</dbReference>
<dbReference type="PANTHER" id="PTHR21004">
    <property type="entry name" value="SERINE PROTEASE-RELATED"/>
    <property type="match status" value="1"/>
</dbReference>
<dbReference type="Pfam" id="PF13365">
    <property type="entry name" value="Trypsin_2"/>
    <property type="match status" value="1"/>
</dbReference>
<dbReference type="PIRSF" id="PIRSF037989">
    <property type="entry name" value="Peptidase_S1B_Tysnd1"/>
    <property type="match status" value="1"/>
</dbReference>
<dbReference type="SUPFAM" id="SSF50494">
    <property type="entry name" value="Trypsin-like serine proteases"/>
    <property type="match status" value="2"/>
</dbReference>
<comment type="function">
    <text evidence="3">Peroxisomal protease that mediates both the removal of the leader peptide from proteins containing a PTS2 target sequence and processes several PTS1-containing proteins. Catalyzes the processing of PTS1-proteins involved in the peroxisomal beta-oxidation of fatty acids.</text>
</comment>
<comment type="subunit">
    <text evidence="3">Homodimer. Forms a heterodimer with the C-terminal cleavage product (45 kDa form). Forms a heterodimer with the N-terminal cleavage product (15 kDa form). Interacts with PEX5. Interacts with LONP2.</text>
</comment>
<comment type="interaction">
    <interactant intactId="EBI-2510623">
        <id>Q2T9J0</id>
    </interactant>
    <interactant intactId="EBI-745468">
        <id>Q8N4T4</id>
        <label>ARHGEF39</label>
    </interactant>
    <organismsDiffer>false</organismsDiffer>
    <experiments>2</experiments>
</comment>
<comment type="interaction">
    <interactant intactId="EBI-5239076">
        <id>Q2T9J0-1</id>
    </interactant>
    <interactant intactId="EBI-5239076">
        <id>Q2T9J0-1</id>
        <label>TYSND1</label>
    </interactant>
    <organismsDiffer>false</organismsDiffer>
    <experiments>5</experiments>
</comment>
<comment type="subcellular location">
    <subcellularLocation>
        <location evidence="3">Peroxisome</location>
    </subcellularLocation>
</comment>
<comment type="alternative products">
    <event type="alternative splicing"/>
    <isoform>
        <id>Q2T9J0-1</id>
        <name>1</name>
        <sequence type="displayed"/>
    </isoform>
    <isoform>
        <id>Q2T9J0-2</id>
        <name>2</name>
        <sequence type="described" ref="VSP_025000 VSP_025001"/>
    </isoform>
</comment>
<comment type="PTM">
    <text>Self-cleavage gives rise to an N-terminal 15-kDa fragment and C-terminal 45-kDa fragment upon import into the peroxisomes. The full-lengh TYSND1 is the active the proteolytic processing of PTS1- and PTS2-proteins and in self-cleavage, and intermolecular self-cleavage of TYSND1 down-regulates its protease activity.</text>
</comment>
<comment type="similarity">
    <text evidence="5">Belongs to the peptidase S1B family.</text>
</comment>